<sequence>MDIKRTVLWVIFFMSAVMLYDNWQRDHGRPSMFFPSATHTAPAAAGGASGTGATTTAGDVPAAAAGAAPSTTAPAAQAQLVKFSTDVYDGEIDTRGGTLAKLTLKKQGDGKQPDLYITLFDHTAGHTYLARTGLLGGDFPNHNDVYTQLNPGSTSLTGDQNTLKLSFESPVKGGVKVVKTYTFTRGSYVIGVDTKIDNVGTAPVTPTVYMELVRDNTAVETPMFSHTFLGPAVYTDAKHFQKIDFSDLDKNKANFEKSADNGWVAMVQHYFASAWIPQQGAKRDIYAEKIDPALYRVGVKQPVAAIAPGQSADVQARLFAGPEEERMLEGIAPGLELVKDYGWVTIIAKPLFWLLEKIHGYVGNWGWAIVLLTVLIKAVFFPLSAASYKSMARMKEITPRMQALRERFKSDPQKMNAALMELYKTEKVNPFGGCLPVVIQIPVFISLYWVLLASVEMRGAPWILWIHDLSQRDPFFILPVLMAVSMFVQTSLNPTPPDPVQAKMMKFMPIAFSVMFFFFPAGLVLYYVVNNVLSIAQQYYITRKLGGVKKKPA</sequence>
<accession>B1K0Y4</accession>
<organism>
    <name type="scientific">Burkholderia orbicola (strain MC0-3)</name>
    <dbReference type="NCBI Taxonomy" id="406425"/>
    <lineage>
        <taxon>Bacteria</taxon>
        <taxon>Pseudomonadati</taxon>
        <taxon>Pseudomonadota</taxon>
        <taxon>Betaproteobacteria</taxon>
        <taxon>Burkholderiales</taxon>
        <taxon>Burkholderiaceae</taxon>
        <taxon>Burkholderia</taxon>
        <taxon>Burkholderia cepacia complex</taxon>
        <taxon>Burkholderia orbicola</taxon>
    </lineage>
</organism>
<comment type="function">
    <text evidence="1">Required for the insertion and/or proper folding and/or complex formation of integral membrane proteins into the membrane. Involved in integration of membrane proteins that insert both dependently and independently of the Sec translocase complex, as well as at least some lipoproteins. Aids folding of multispanning membrane proteins.</text>
</comment>
<comment type="subunit">
    <text evidence="1">Interacts with the Sec translocase complex via SecD. Specifically interacts with transmembrane segments of nascent integral membrane proteins during membrane integration.</text>
</comment>
<comment type="subcellular location">
    <subcellularLocation>
        <location evidence="1">Cell inner membrane</location>
        <topology evidence="1">Multi-pass membrane protein</topology>
    </subcellularLocation>
</comment>
<comment type="similarity">
    <text evidence="1">Belongs to the OXA1/ALB3/YidC family. Type 1 subfamily.</text>
</comment>
<name>YIDC_BURO0</name>
<feature type="chain" id="PRO_1000187640" description="Membrane protein insertase YidC">
    <location>
        <begin position="1"/>
        <end position="553"/>
    </location>
</feature>
<feature type="transmembrane region" description="Helical" evidence="1">
    <location>
        <begin position="7"/>
        <end position="24"/>
    </location>
</feature>
<feature type="transmembrane region" description="Helical" evidence="1">
    <location>
        <begin position="365"/>
        <end position="385"/>
    </location>
</feature>
<feature type="transmembrane region" description="Helical" evidence="1">
    <location>
        <begin position="435"/>
        <end position="455"/>
    </location>
</feature>
<feature type="transmembrane region" description="Helical" evidence="1">
    <location>
        <begin position="474"/>
        <end position="494"/>
    </location>
</feature>
<feature type="transmembrane region" description="Helical" evidence="1">
    <location>
        <begin position="509"/>
        <end position="529"/>
    </location>
</feature>
<reference key="1">
    <citation type="submission" date="2008-02" db="EMBL/GenBank/DDBJ databases">
        <title>Complete sequence of chromosome 1 of Burkholderia cenocepacia MC0-3.</title>
        <authorList>
            <person name="Copeland A."/>
            <person name="Lucas S."/>
            <person name="Lapidus A."/>
            <person name="Barry K."/>
            <person name="Bruce D."/>
            <person name="Goodwin L."/>
            <person name="Glavina del Rio T."/>
            <person name="Dalin E."/>
            <person name="Tice H."/>
            <person name="Pitluck S."/>
            <person name="Chain P."/>
            <person name="Malfatti S."/>
            <person name="Shin M."/>
            <person name="Vergez L."/>
            <person name="Schmutz J."/>
            <person name="Larimer F."/>
            <person name="Land M."/>
            <person name="Hauser L."/>
            <person name="Kyrpides N."/>
            <person name="Mikhailova N."/>
            <person name="Tiedje J."/>
            <person name="Richardson P."/>
        </authorList>
    </citation>
    <scope>NUCLEOTIDE SEQUENCE [LARGE SCALE GENOMIC DNA]</scope>
    <source>
        <strain>MC0-3</strain>
    </source>
</reference>
<gene>
    <name evidence="1" type="primary">yidC</name>
    <name type="ordered locus">Bcenmc03_3181</name>
</gene>
<proteinExistence type="inferred from homology"/>
<protein>
    <recommendedName>
        <fullName evidence="1">Membrane protein insertase YidC</fullName>
    </recommendedName>
    <alternativeName>
        <fullName evidence="1">Foldase YidC</fullName>
    </alternativeName>
    <alternativeName>
        <fullName evidence="1">Membrane integrase YidC</fullName>
    </alternativeName>
    <alternativeName>
        <fullName evidence="1">Membrane protein YidC</fullName>
    </alternativeName>
</protein>
<dbReference type="EMBL" id="CP000958">
    <property type="protein sequence ID" value="ACA92338.1"/>
    <property type="molecule type" value="Genomic_DNA"/>
</dbReference>
<dbReference type="RefSeq" id="WP_012329458.1">
    <property type="nucleotide sequence ID" value="NC_010508.1"/>
</dbReference>
<dbReference type="SMR" id="B1K0Y4"/>
<dbReference type="GeneID" id="83049963"/>
<dbReference type="KEGG" id="bcm:Bcenmc03_3181"/>
<dbReference type="HOGENOM" id="CLU_016535_3_0_4"/>
<dbReference type="Proteomes" id="UP000002169">
    <property type="component" value="Chromosome 1"/>
</dbReference>
<dbReference type="GO" id="GO:0005886">
    <property type="term" value="C:plasma membrane"/>
    <property type="evidence" value="ECO:0007669"/>
    <property type="project" value="UniProtKB-SubCell"/>
</dbReference>
<dbReference type="GO" id="GO:0032977">
    <property type="term" value="F:membrane insertase activity"/>
    <property type="evidence" value="ECO:0007669"/>
    <property type="project" value="InterPro"/>
</dbReference>
<dbReference type="GO" id="GO:0051205">
    <property type="term" value="P:protein insertion into membrane"/>
    <property type="evidence" value="ECO:0007669"/>
    <property type="project" value="TreeGrafter"/>
</dbReference>
<dbReference type="GO" id="GO:0015031">
    <property type="term" value="P:protein transport"/>
    <property type="evidence" value="ECO:0007669"/>
    <property type="project" value="UniProtKB-KW"/>
</dbReference>
<dbReference type="CDD" id="cd20070">
    <property type="entry name" value="5TM_YidC_Alb3"/>
    <property type="match status" value="1"/>
</dbReference>
<dbReference type="CDD" id="cd19961">
    <property type="entry name" value="EcYidC-like_peri"/>
    <property type="match status" value="1"/>
</dbReference>
<dbReference type="Gene3D" id="2.70.98.90">
    <property type="match status" value="1"/>
</dbReference>
<dbReference type="HAMAP" id="MF_01810">
    <property type="entry name" value="YidC_type1"/>
    <property type="match status" value="1"/>
</dbReference>
<dbReference type="InterPro" id="IPR019998">
    <property type="entry name" value="Membr_insert_YidC"/>
</dbReference>
<dbReference type="InterPro" id="IPR028053">
    <property type="entry name" value="Membr_insert_YidC_N"/>
</dbReference>
<dbReference type="InterPro" id="IPR001708">
    <property type="entry name" value="YidC/ALB3/OXA1/COX18"/>
</dbReference>
<dbReference type="InterPro" id="IPR028055">
    <property type="entry name" value="YidC/Oxa/ALB_C"/>
</dbReference>
<dbReference type="InterPro" id="IPR047196">
    <property type="entry name" value="YidC_ALB_C"/>
</dbReference>
<dbReference type="InterPro" id="IPR038221">
    <property type="entry name" value="YidC_periplasmic_sf"/>
</dbReference>
<dbReference type="NCBIfam" id="NF002352">
    <property type="entry name" value="PRK01318.1-3"/>
    <property type="match status" value="1"/>
</dbReference>
<dbReference type="NCBIfam" id="TIGR03593">
    <property type="entry name" value="yidC_nterm"/>
    <property type="match status" value="1"/>
</dbReference>
<dbReference type="NCBIfam" id="TIGR03592">
    <property type="entry name" value="yidC_oxa1_cterm"/>
    <property type="match status" value="1"/>
</dbReference>
<dbReference type="PANTHER" id="PTHR12428:SF65">
    <property type="entry name" value="CYTOCHROME C OXIDASE ASSEMBLY PROTEIN COX18, MITOCHONDRIAL"/>
    <property type="match status" value="1"/>
</dbReference>
<dbReference type="PANTHER" id="PTHR12428">
    <property type="entry name" value="OXA1"/>
    <property type="match status" value="1"/>
</dbReference>
<dbReference type="Pfam" id="PF02096">
    <property type="entry name" value="60KD_IMP"/>
    <property type="match status" value="1"/>
</dbReference>
<dbReference type="Pfam" id="PF14849">
    <property type="entry name" value="YidC_periplas"/>
    <property type="match status" value="1"/>
</dbReference>
<dbReference type="PRINTS" id="PR00701">
    <property type="entry name" value="60KDINNERMP"/>
</dbReference>
<dbReference type="PRINTS" id="PR01900">
    <property type="entry name" value="YIDCPROTEIN"/>
</dbReference>
<evidence type="ECO:0000255" key="1">
    <source>
        <dbReference type="HAMAP-Rule" id="MF_01810"/>
    </source>
</evidence>
<keyword id="KW-0997">Cell inner membrane</keyword>
<keyword id="KW-1003">Cell membrane</keyword>
<keyword id="KW-0143">Chaperone</keyword>
<keyword id="KW-0472">Membrane</keyword>
<keyword id="KW-0653">Protein transport</keyword>
<keyword id="KW-0812">Transmembrane</keyword>
<keyword id="KW-1133">Transmembrane helix</keyword>
<keyword id="KW-0813">Transport</keyword>